<reference key="1">
    <citation type="journal article" date="2007" name="Genome Biol.">
        <title>Characterization and modeling of the Haemophilus influenzae core and supragenomes based on the complete genomic sequences of Rd and 12 clinical nontypeable strains.</title>
        <authorList>
            <person name="Hogg J.S."/>
            <person name="Hu F.Z."/>
            <person name="Janto B."/>
            <person name="Boissy R."/>
            <person name="Hayes J."/>
            <person name="Keefe R."/>
            <person name="Post J.C."/>
            <person name="Ehrlich G.D."/>
        </authorList>
    </citation>
    <scope>NUCLEOTIDE SEQUENCE [LARGE SCALE GENOMIC DNA]</scope>
    <source>
        <strain>PittEE</strain>
    </source>
</reference>
<dbReference type="EC" id="3.5.1.18" evidence="1"/>
<dbReference type="EMBL" id="CP000671">
    <property type="protein sequence ID" value="ABQ97995.1"/>
    <property type="molecule type" value="Genomic_DNA"/>
</dbReference>
<dbReference type="SMR" id="A5UB44"/>
<dbReference type="KEGG" id="hip:CGSHiEE_02785"/>
<dbReference type="HOGENOM" id="CLU_021802_4_0_6"/>
<dbReference type="UniPathway" id="UPA00034">
    <property type="reaction ID" value="UER00021"/>
</dbReference>
<dbReference type="GO" id="GO:0008777">
    <property type="term" value="F:acetylornithine deacetylase activity"/>
    <property type="evidence" value="ECO:0007669"/>
    <property type="project" value="TreeGrafter"/>
</dbReference>
<dbReference type="GO" id="GO:0050897">
    <property type="term" value="F:cobalt ion binding"/>
    <property type="evidence" value="ECO:0007669"/>
    <property type="project" value="UniProtKB-UniRule"/>
</dbReference>
<dbReference type="GO" id="GO:0009014">
    <property type="term" value="F:succinyl-diaminopimelate desuccinylase activity"/>
    <property type="evidence" value="ECO:0007669"/>
    <property type="project" value="UniProtKB-UniRule"/>
</dbReference>
<dbReference type="GO" id="GO:0008270">
    <property type="term" value="F:zinc ion binding"/>
    <property type="evidence" value="ECO:0007669"/>
    <property type="project" value="UniProtKB-UniRule"/>
</dbReference>
<dbReference type="GO" id="GO:0019877">
    <property type="term" value="P:diaminopimelate biosynthetic process"/>
    <property type="evidence" value="ECO:0007669"/>
    <property type="project" value="UniProtKB-UniRule"/>
</dbReference>
<dbReference type="GO" id="GO:0006526">
    <property type="term" value="P:L-arginine biosynthetic process"/>
    <property type="evidence" value="ECO:0007669"/>
    <property type="project" value="TreeGrafter"/>
</dbReference>
<dbReference type="GO" id="GO:0009089">
    <property type="term" value="P:lysine biosynthetic process via diaminopimelate"/>
    <property type="evidence" value="ECO:0007669"/>
    <property type="project" value="UniProtKB-UniRule"/>
</dbReference>
<dbReference type="CDD" id="cd03891">
    <property type="entry name" value="M20_DapE_proteobac"/>
    <property type="match status" value="1"/>
</dbReference>
<dbReference type="FunFam" id="3.30.70.360:FF:000011">
    <property type="entry name" value="Succinyl-diaminopimelate desuccinylase"/>
    <property type="match status" value="1"/>
</dbReference>
<dbReference type="FunFam" id="3.40.630.10:FF:000005">
    <property type="entry name" value="Succinyl-diaminopimelate desuccinylase"/>
    <property type="match status" value="1"/>
</dbReference>
<dbReference type="Gene3D" id="3.30.70.360">
    <property type="match status" value="1"/>
</dbReference>
<dbReference type="Gene3D" id="3.40.630.10">
    <property type="entry name" value="Zn peptidases"/>
    <property type="match status" value="1"/>
</dbReference>
<dbReference type="HAMAP" id="MF_01690">
    <property type="entry name" value="DapE"/>
    <property type="match status" value="1"/>
</dbReference>
<dbReference type="InterPro" id="IPR001261">
    <property type="entry name" value="ArgE/DapE_CS"/>
</dbReference>
<dbReference type="InterPro" id="IPR036264">
    <property type="entry name" value="Bact_exopeptidase_dim_dom"/>
</dbReference>
<dbReference type="InterPro" id="IPR005941">
    <property type="entry name" value="DapE_proteobac"/>
</dbReference>
<dbReference type="InterPro" id="IPR002933">
    <property type="entry name" value="Peptidase_M20"/>
</dbReference>
<dbReference type="InterPro" id="IPR011650">
    <property type="entry name" value="Peptidase_M20_dimer"/>
</dbReference>
<dbReference type="InterPro" id="IPR050072">
    <property type="entry name" value="Peptidase_M20A"/>
</dbReference>
<dbReference type="NCBIfam" id="TIGR01246">
    <property type="entry name" value="dapE_proteo"/>
    <property type="match status" value="1"/>
</dbReference>
<dbReference type="NCBIfam" id="NF009557">
    <property type="entry name" value="PRK13009.1"/>
    <property type="match status" value="1"/>
</dbReference>
<dbReference type="PANTHER" id="PTHR43808">
    <property type="entry name" value="ACETYLORNITHINE DEACETYLASE"/>
    <property type="match status" value="1"/>
</dbReference>
<dbReference type="PANTHER" id="PTHR43808:SF31">
    <property type="entry name" value="N-ACETYL-L-CITRULLINE DEACETYLASE"/>
    <property type="match status" value="1"/>
</dbReference>
<dbReference type="Pfam" id="PF07687">
    <property type="entry name" value="M20_dimer"/>
    <property type="match status" value="1"/>
</dbReference>
<dbReference type="Pfam" id="PF01546">
    <property type="entry name" value="Peptidase_M20"/>
    <property type="match status" value="1"/>
</dbReference>
<dbReference type="SUPFAM" id="SSF55031">
    <property type="entry name" value="Bacterial exopeptidase dimerisation domain"/>
    <property type="match status" value="1"/>
</dbReference>
<dbReference type="SUPFAM" id="SSF53187">
    <property type="entry name" value="Zn-dependent exopeptidases"/>
    <property type="match status" value="1"/>
</dbReference>
<dbReference type="PROSITE" id="PS00758">
    <property type="entry name" value="ARGE_DAPE_CPG2_1"/>
    <property type="match status" value="1"/>
</dbReference>
<organism>
    <name type="scientific">Haemophilus influenzae (strain PittEE)</name>
    <dbReference type="NCBI Taxonomy" id="374930"/>
    <lineage>
        <taxon>Bacteria</taxon>
        <taxon>Pseudomonadati</taxon>
        <taxon>Pseudomonadota</taxon>
        <taxon>Gammaproteobacteria</taxon>
        <taxon>Pasteurellales</taxon>
        <taxon>Pasteurellaceae</taxon>
        <taxon>Haemophilus</taxon>
    </lineage>
</organism>
<protein>
    <recommendedName>
        <fullName evidence="1">Succinyl-diaminopimelate desuccinylase</fullName>
        <shortName evidence="1">SDAP desuccinylase</shortName>
        <ecNumber evidence="1">3.5.1.18</ecNumber>
    </recommendedName>
    <alternativeName>
        <fullName evidence="1">N-succinyl-LL-2,6-diaminoheptanedioate amidohydrolase</fullName>
    </alternativeName>
</protein>
<evidence type="ECO:0000255" key="1">
    <source>
        <dbReference type="HAMAP-Rule" id="MF_01690"/>
    </source>
</evidence>
<keyword id="KW-0028">Amino-acid biosynthesis</keyword>
<keyword id="KW-0170">Cobalt</keyword>
<keyword id="KW-0220">Diaminopimelate biosynthesis</keyword>
<keyword id="KW-0378">Hydrolase</keyword>
<keyword id="KW-0457">Lysine biosynthesis</keyword>
<keyword id="KW-0479">Metal-binding</keyword>
<keyword id="KW-0862">Zinc</keyword>
<proteinExistence type="inferred from homology"/>
<gene>
    <name evidence="1" type="primary">dapE</name>
    <name type="ordered locus">CGSHiEE_02785</name>
</gene>
<accession>A5UB44</accession>
<name>DAPE_HAEIE</name>
<sequence length="377" mass="41195">MKEKVVSLAQDLIRRPSISPNDEGCQQIIAEGLEKLGFQIEWMPFNDTLNLWAKHGTSEPVIAFVGHTDVVPTGDENQWSSPPFSAEIIDGILYGRGAADMKGSLAAMIVAAEEYVKANPNHKGTIALLITSDEEAAAKDGTIRVVETLMTRDEKITYCMVGEPSSAKNLGDVVKNGRRGSITGNLYIQGIQGHVAYPHLAENPIHKAAPFLQELTTYQWDKGNEFFPPTSLQIANIHAGTGSNNVIPAELYIQFNLRYCTEVTDEIIKQKVAEMLAKHNLKYRIEWNLSGKPFLTKPGKLLDSITSAIEEITGITPKAETGGGTSDGRFIALMGAEVVEFGPLNSSIHKVNECVSVEDLGKCGEIYHKMLVNLLDS</sequence>
<comment type="function">
    <text evidence="1">Catalyzes the hydrolysis of N-succinyl-L,L-diaminopimelic acid (SDAP), forming succinate and LL-2,6-diaminopimelate (DAP), an intermediate involved in the bacterial biosynthesis of lysine and meso-diaminopimelic acid, an essential component of bacterial cell walls.</text>
</comment>
<comment type="catalytic activity">
    <reaction evidence="1">
        <text>N-succinyl-(2S,6S)-2,6-diaminopimelate + H2O = (2S,6S)-2,6-diaminopimelate + succinate</text>
        <dbReference type="Rhea" id="RHEA:22608"/>
        <dbReference type="ChEBI" id="CHEBI:15377"/>
        <dbReference type="ChEBI" id="CHEBI:30031"/>
        <dbReference type="ChEBI" id="CHEBI:57609"/>
        <dbReference type="ChEBI" id="CHEBI:58087"/>
        <dbReference type="EC" id="3.5.1.18"/>
    </reaction>
</comment>
<comment type="cofactor">
    <cofactor evidence="1">
        <name>Zn(2+)</name>
        <dbReference type="ChEBI" id="CHEBI:29105"/>
    </cofactor>
    <cofactor evidence="1">
        <name>Co(2+)</name>
        <dbReference type="ChEBI" id="CHEBI:48828"/>
    </cofactor>
    <text evidence="1">Binds 2 Zn(2+) or Co(2+) ions per subunit.</text>
</comment>
<comment type="pathway">
    <text evidence="1">Amino-acid biosynthesis; L-lysine biosynthesis via DAP pathway; LL-2,6-diaminopimelate from (S)-tetrahydrodipicolinate (succinylase route): step 3/3.</text>
</comment>
<comment type="subunit">
    <text evidence="1">Homodimer.</text>
</comment>
<comment type="similarity">
    <text evidence="1">Belongs to the peptidase M20A family. DapE subfamily.</text>
</comment>
<feature type="chain" id="PRO_0000375577" description="Succinyl-diaminopimelate desuccinylase">
    <location>
        <begin position="1"/>
        <end position="377"/>
    </location>
</feature>
<feature type="active site" evidence="1">
    <location>
        <position position="69"/>
    </location>
</feature>
<feature type="active site" description="Proton acceptor" evidence="1">
    <location>
        <position position="134"/>
    </location>
</feature>
<feature type="binding site" evidence="1">
    <location>
        <position position="67"/>
    </location>
    <ligand>
        <name>Zn(2+)</name>
        <dbReference type="ChEBI" id="CHEBI:29105"/>
        <label>1</label>
    </ligand>
</feature>
<feature type="binding site" evidence="1">
    <location>
        <position position="100"/>
    </location>
    <ligand>
        <name>Zn(2+)</name>
        <dbReference type="ChEBI" id="CHEBI:29105"/>
        <label>1</label>
    </ligand>
</feature>
<feature type="binding site" evidence="1">
    <location>
        <position position="100"/>
    </location>
    <ligand>
        <name>Zn(2+)</name>
        <dbReference type="ChEBI" id="CHEBI:29105"/>
        <label>2</label>
    </ligand>
</feature>
<feature type="binding site" evidence="1">
    <location>
        <position position="135"/>
    </location>
    <ligand>
        <name>Zn(2+)</name>
        <dbReference type="ChEBI" id="CHEBI:29105"/>
        <label>2</label>
    </ligand>
</feature>
<feature type="binding site" evidence="1">
    <location>
        <position position="163"/>
    </location>
    <ligand>
        <name>Zn(2+)</name>
        <dbReference type="ChEBI" id="CHEBI:29105"/>
        <label>1</label>
    </ligand>
</feature>
<feature type="binding site" evidence="1">
    <location>
        <position position="349"/>
    </location>
    <ligand>
        <name>Zn(2+)</name>
        <dbReference type="ChEBI" id="CHEBI:29105"/>
        <label>2</label>
    </ligand>
</feature>